<reference key="1">
    <citation type="journal article" date="2003" name="Nat. Genet.">
        <title>Comparative analysis of the genome sequences of Bordetella pertussis, Bordetella parapertussis and Bordetella bronchiseptica.</title>
        <authorList>
            <person name="Parkhill J."/>
            <person name="Sebaihia M."/>
            <person name="Preston A."/>
            <person name="Murphy L.D."/>
            <person name="Thomson N.R."/>
            <person name="Harris D.E."/>
            <person name="Holden M.T.G."/>
            <person name="Churcher C.M."/>
            <person name="Bentley S.D."/>
            <person name="Mungall K.L."/>
            <person name="Cerdeno-Tarraga A.-M."/>
            <person name="Temple L."/>
            <person name="James K.D."/>
            <person name="Harris B."/>
            <person name="Quail M.A."/>
            <person name="Achtman M."/>
            <person name="Atkin R."/>
            <person name="Baker S."/>
            <person name="Basham D."/>
            <person name="Bason N."/>
            <person name="Cherevach I."/>
            <person name="Chillingworth T."/>
            <person name="Collins M."/>
            <person name="Cronin A."/>
            <person name="Davis P."/>
            <person name="Doggett J."/>
            <person name="Feltwell T."/>
            <person name="Goble A."/>
            <person name="Hamlin N."/>
            <person name="Hauser H."/>
            <person name="Holroyd S."/>
            <person name="Jagels K."/>
            <person name="Leather S."/>
            <person name="Moule S."/>
            <person name="Norberczak H."/>
            <person name="O'Neil S."/>
            <person name="Ormond D."/>
            <person name="Price C."/>
            <person name="Rabbinowitsch E."/>
            <person name="Rutter S."/>
            <person name="Sanders M."/>
            <person name="Saunders D."/>
            <person name="Seeger K."/>
            <person name="Sharp S."/>
            <person name="Simmonds M."/>
            <person name="Skelton J."/>
            <person name="Squares R."/>
            <person name="Squares S."/>
            <person name="Stevens K."/>
            <person name="Unwin L."/>
            <person name="Whitehead S."/>
            <person name="Barrell B.G."/>
            <person name="Maskell D.J."/>
        </authorList>
    </citation>
    <scope>NUCLEOTIDE SEQUENCE [LARGE SCALE GENOMIC DNA]</scope>
    <source>
        <strain>12822 / ATCC BAA-587 / NCTC 13253</strain>
    </source>
</reference>
<name>CSPA_BORPA</name>
<keyword id="KW-0010">Activator</keyword>
<keyword id="KW-0963">Cytoplasm</keyword>
<keyword id="KW-0238">DNA-binding</keyword>
<keyword id="KW-0804">Transcription</keyword>
<keyword id="KW-0805">Transcription regulation</keyword>
<organism>
    <name type="scientific">Bordetella parapertussis (strain 12822 / ATCC BAA-587 / NCTC 13253)</name>
    <dbReference type="NCBI Taxonomy" id="257311"/>
    <lineage>
        <taxon>Bacteria</taxon>
        <taxon>Pseudomonadati</taxon>
        <taxon>Pseudomonadota</taxon>
        <taxon>Betaproteobacteria</taxon>
        <taxon>Burkholderiales</taxon>
        <taxon>Alcaligenaceae</taxon>
        <taxon>Bordetella</taxon>
    </lineage>
</organism>
<protein>
    <recommendedName>
        <fullName>Cold shock-like protein CspA</fullName>
    </recommendedName>
</protein>
<sequence length="67" mass="7348">METGVVKWFNAEKGYGFITPEAGGKDLFAHFSEIQANGFKSLEENQRVSFVTAMGPKGPQATKIQIL</sequence>
<accession>P0A354</accession>
<accession>Q9Z5R4</accession>
<evidence type="ECO:0000250" key="1"/>
<evidence type="ECO:0000305" key="2"/>
<comment type="subcellular location">
    <subcellularLocation>
        <location evidence="1">Cytoplasm</location>
    </subcellularLocation>
</comment>
<comment type="sequence caution" evidence="2">
    <conflict type="erroneous initiation">
        <sequence resource="EMBL-CDS" id="CAE37301"/>
    </conflict>
</comment>
<gene>
    <name type="primary">cspA</name>
    <name type="ordered locus">BPP2001</name>
</gene>
<proteinExistence type="inferred from homology"/>
<dbReference type="EMBL" id="BX640429">
    <property type="protein sequence ID" value="CAE37301.1"/>
    <property type="status" value="ALT_INIT"/>
    <property type="molecule type" value="Genomic_DNA"/>
</dbReference>
<dbReference type="RefSeq" id="WP_010930551.1">
    <property type="nucleotide sequence ID" value="NC_002928.3"/>
</dbReference>
<dbReference type="SMR" id="P0A354"/>
<dbReference type="KEGG" id="bpa:BPP2001"/>
<dbReference type="HOGENOM" id="CLU_117621_0_3_4"/>
<dbReference type="Proteomes" id="UP000001421">
    <property type="component" value="Chromosome"/>
</dbReference>
<dbReference type="GO" id="GO:0005829">
    <property type="term" value="C:cytosol"/>
    <property type="evidence" value="ECO:0007669"/>
    <property type="project" value="UniProtKB-ARBA"/>
</dbReference>
<dbReference type="GO" id="GO:0003677">
    <property type="term" value="F:DNA binding"/>
    <property type="evidence" value="ECO:0007669"/>
    <property type="project" value="UniProtKB-KW"/>
</dbReference>
<dbReference type="CDD" id="cd04458">
    <property type="entry name" value="CSP_CDS"/>
    <property type="match status" value="1"/>
</dbReference>
<dbReference type="FunFam" id="2.40.50.140:FF:000006">
    <property type="entry name" value="Cold shock protein CspC"/>
    <property type="match status" value="1"/>
</dbReference>
<dbReference type="Gene3D" id="2.40.50.140">
    <property type="entry name" value="Nucleic acid-binding proteins"/>
    <property type="match status" value="1"/>
</dbReference>
<dbReference type="InterPro" id="IPR012156">
    <property type="entry name" value="Cold_shock_CspA"/>
</dbReference>
<dbReference type="InterPro" id="IPR011129">
    <property type="entry name" value="CSD"/>
</dbReference>
<dbReference type="InterPro" id="IPR019844">
    <property type="entry name" value="CSD_CS"/>
</dbReference>
<dbReference type="InterPro" id="IPR002059">
    <property type="entry name" value="CSP_DNA-bd"/>
</dbReference>
<dbReference type="InterPro" id="IPR012340">
    <property type="entry name" value="NA-bd_OB-fold"/>
</dbReference>
<dbReference type="PANTHER" id="PTHR46565">
    <property type="entry name" value="COLD SHOCK DOMAIN PROTEIN 2"/>
    <property type="match status" value="1"/>
</dbReference>
<dbReference type="PANTHER" id="PTHR46565:SF20">
    <property type="entry name" value="COLD SHOCK DOMAIN-CONTAINING PROTEIN 4"/>
    <property type="match status" value="1"/>
</dbReference>
<dbReference type="Pfam" id="PF00313">
    <property type="entry name" value="CSD"/>
    <property type="match status" value="1"/>
</dbReference>
<dbReference type="PIRSF" id="PIRSF002599">
    <property type="entry name" value="Cold_shock_A"/>
    <property type="match status" value="1"/>
</dbReference>
<dbReference type="PRINTS" id="PR00050">
    <property type="entry name" value="COLDSHOCK"/>
</dbReference>
<dbReference type="SMART" id="SM00357">
    <property type="entry name" value="CSP"/>
    <property type="match status" value="1"/>
</dbReference>
<dbReference type="SUPFAM" id="SSF50249">
    <property type="entry name" value="Nucleic acid-binding proteins"/>
    <property type="match status" value="1"/>
</dbReference>
<dbReference type="PROSITE" id="PS00352">
    <property type="entry name" value="CSD_1"/>
    <property type="match status" value="1"/>
</dbReference>
<dbReference type="PROSITE" id="PS51857">
    <property type="entry name" value="CSD_2"/>
    <property type="match status" value="1"/>
</dbReference>
<feature type="chain" id="PRO_0000100300" description="Cold shock-like protein CspA">
    <location>
        <begin position="1"/>
        <end position="67"/>
    </location>
</feature>
<feature type="domain" description="CSD">
    <location>
        <begin position="4"/>
        <end position="64"/>
    </location>
</feature>